<comment type="subcellular location">
    <subcellularLocation>
        <location>Plastid</location>
        <location>Chloroplast</location>
    </subcellularLocation>
</comment>
<comment type="similarity">
    <text evidence="1">Belongs to the ycf15 family.</text>
</comment>
<comment type="caution">
    <text evidence="1">Could be the product of a pseudogene.</text>
</comment>
<gene>
    <name type="primary">ycf15-A</name>
</gene>
<gene>
    <name type="primary">ycf15-B</name>
</gene>
<proteinExistence type="uncertain"/>
<protein>
    <recommendedName>
        <fullName>Putative uncharacterized protein ycf15</fullName>
    </recommendedName>
</protein>
<keyword id="KW-0150">Chloroplast</keyword>
<keyword id="KW-0934">Plastid</keyword>
<keyword id="KW-1185">Reference proteome</keyword>
<dbReference type="EMBL" id="DQ231562">
    <property type="protein sequence ID" value="ABB90082.1"/>
    <property type="molecule type" value="Genomic_DNA"/>
</dbReference>
<dbReference type="EMBL" id="DQ231562">
    <property type="protein sequence ID" value="ABB90098.1"/>
    <property type="molecule type" value="Genomic_DNA"/>
</dbReference>
<dbReference type="EMBL" id="DQ386163">
    <property type="protein sequence ID" value="ABD47100.1"/>
    <property type="molecule type" value="Genomic_DNA"/>
</dbReference>
<dbReference type="EMBL" id="DQ386163">
    <property type="protein sequence ID" value="ABD47118.1"/>
    <property type="molecule type" value="Genomic_DNA"/>
</dbReference>
<dbReference type="STRING" id="4113.Q2VED6"/>
<dbReference type="InParanoid" id="Q2VED6"/>
<dbReference type="Proteomes" id="UP000011115">
    <property type="component" value="Unassembled WGS sequence"/>
</dbReference>
<dbReference type="GO" id="GO:0009507">
    <property type="term" value="C:chloroplast"/>
    <property type="evidence" value="ECO:0007669"/>
    <property type="project" value="UniProtKB-SubCell"/>
</dbReference>
<dbReference type="InterPro" id="IPR019645">
    <property type="entry name" value="Uncharacterised_Ycf15"/>
</dbReference>
<dbReference type="Pfam" id="PF10705">
    <property type="entry name" value="Ycf15"/>
    <property type="match status" value="1"/>
</dbReference>
<feature type="chain" id="PRO_0000277570" description="Putative uncharacterized protein ycf15">
    <location>
        <begin position="1"/>
        <end position="87"/>
    </location>
</feature>
<evidence type="ECO:0000305" key="1"/>
<organism>
    <name type="scientific">Solanum tuberosum</name>
    <name type="common">Potato</name>
    <dbReference type="NCBI Taxonomy" id="4113"/>
    <lineage>
        <taxon>Eukaryota</taxon>
        <taxon>Viridiplantae</taxon>
        <taxon>Streptophyta</taxon>
        <taxon>Embryophyta</taxon>
        <taxon>Tracheophyta</taxon>
        <taxon>Spermatophyta</taxon>
        <taxon>Magnoliopsida</taxon>
        <taxon>eudicotyledons</taxon>
        <taxon>Gunneridae</taxon>
        <taxon>Pentapetalae</taxon>
        <taxon>asterids</taxon>
        <taxon>lamiids</taxon>
        <taxon>Solanales</taxon>
        <taxon>Solanaceae</taxon>
        <taxon>Solanoideae</taxon>
        <taxon>Solaneae</taxon>
        <taxon>Solanum</taxon>
    </lineage>
</organism>
<accession>Q2VED6</accession>
<name>YCF15_SOLTU</name>
<sequence length="87" mass="10545">METLVSSIFWTLAPWKNMLLLKHGRIEILDQNTMYGWYELPKQEFLNSKQPVQIFTTKKYWILFRIGPERRRKAGMPTGVYYIEFTR</sequence>
<reference key="1">
    <citation type="journal article" date="2006" name="Plant Cell Rep.">
        <title>The complete chloroplast genome sequences of Solanum tuberosum and comparative analysis with Solanaceae species identified the presence of a 241-bp deletion in cultivated potato chloroplast DNA sequence.</title>
        <authorList>
            <person name="Chung H.-J."/>
            <person name="Jung J.D."/>
            <person name="Park H.-W."/>
            <person name="Kim J.-H."/>
            <person name="Cha H.W."/>
            <person name="Min S.R."/>
            <person name="Jeong W.-J."/>
            <person name="Liu J.R."/>
        </authorList>
    </citation>
    <scope>NUCLEOTIDE SEQUENCE [LARGE SCALE GENOMIC DNA]</scope>
    <source>
        <strain>cv. Desiree</strain>
    </source>
</reference>
<reference key="2">
    <citation type="submission" date="2006-02" db="EMBL/GenBank/DDBJ databases">
        <title>Complete chloroplast genome sequences of Solanum tuberosum cultivar Desiree and comparative analyses with other Solanaceae genomes.</title>
        <authorList>
            <person name="Gargano D."/>
            <person name="Scotti N."/>
            <person name="Vezzi A."/>
            <person name="Bilardi A."/>
            <person name="Valle G."/>
            <person name="Grillo S."/>
            <person name="Cardi T."/>
        </authorList>
    </citation>
    <scope>NUCLEOTIDE SEQUENCE [LARGE SCALE GENOMIC DNA]</scope>
    <source>
        <strain>cv. Desiree</strain>
    </source>
</reference>
<geneLocation type="chloroplast"/>